<comment type="function">
    <text evidence="1">Involved in membrane remodeling.</text>
</comment>
<comment type="subcellular location">
    <subcellularLocation>
        <location evidence="2">Membrane</location>
        <topology evidence="2">Multi-pass membrane protein</topology>
    </subcellularLocation>
</comment>
<comment type="tissue specificity">
    <text evidence="3">Restricted to flowers.</text>
</comment>
<comment type="similarity">
    <text evidence="5">Belongs to the plant DMP1 protein family.</text>
</comment>
<comment type="sequence caution" evidence="5">
    <conflict type="erroneous termination">
        <sequence resource="EMBL-CDS" id="ABK28280"/>
    </conflict>
    <text>Extended C-terminus.</text>
</comment>
<gene>
    <name evidence="4" type="primary">DMP10</name>
    <name evidence="6" type="ordered locus">At5g27370</name>
    <name evidence="5" type="ORF">F21A20.80</name>
</gene>
<name>DMP10_ARATH</name>
<reference key="1">
    <citation type="journal article" date="2000" name="Nature">
        <title>Sequence and analysis of chromosome 5 of the plant Arabidopsis thaliana.</title>
        <authorList>
            <person name="Tabata S."/>
            <person name="Kaneko T."/>
            <person name="Nakamura Y."/>
            <person name="Kotani H."/>
            <person name="Kato T."/>
            <person name="Asamizu E."/>
            <person name="Miyajima N."/>
            <person name="Sasamoto S."/>
            <person name="Kimura T."/>
            <person name="Hosouchi T."/>
            <person name="Kawashima K."/>
            <person name="Kohara M."/>
            <person name="Matsumoto M."/>
            <person name="Matsuno A."/>
            <person name="Muraki A."/>
            <person name="Nakayama S."/>
            <person name="Nakazaki N."/>
            <person name="Naruo K."/>
            <person name="Okumura S."/>
            <person name="Shinpo S."/>
            <person name="Takeuchi C."/>
            <person name="Wada T."/>
            <person name="Watanabe A."/>
            <person name="Yamada M."/>
            <person name="Yasuda M."/>
            <person name="Sato S."/>
            <person name="de la Bastide M."/>
            <person name="Huang E."/>
            <person name="Spiegel L."/>
            <person name="Gnoj L."/>
            <person name="O'Shaughnessy A."/>
            <person name="Preston R."/>
            <person name="Habermann K."/>
            <person name="Murray J."/>
            <person name="Johnson D."/>
            <person name="Rohlfing T."/>
            <person name="Nelson J."/>
            <person name="Stoneking T."/>
            <person name="Pepin K."/>
            <person name="Spieth J."/>
            <person name="Sekhon M."/>
            <person name="Armstrong J."/>
            <person name="Becker M."/>
            <person name="Belter E."/>
            <person name="Cordum H."/>
            <person name="Cordes M."/>
            <person name="Courtney L."/>
            <person name="Courtney W."/>
            <person name="Dante M."/>
            <person name="Du H."/>
            <person name="Edwards J."/>
            <person name="Fryman J."/>
            <person name="Haakensen B."/>
            <person name="Lamar E."/>
            <person name="Latreille P."/>
            <person name="Leonard S."/>
            <person name="Meyer R."/>
            <person name="Mulvaney E."/>
            <person name="Ozersky P."/>
            <person name="Riley A."/>
            <person name="Strowmatt C."/>
            <person name="Wagner-McPherson C."/>
            <person name="Wollam A."/>
            <person name="Yoakum M."/>
            <person name="Bell M."/>
            <person name="Dedhia N."/>
            <person name="Parnell L."/>
            <person name="Shah R."/>
            <person name="Rodriguez M."/>
            <person name="Hoon See L."/>
            <person name="Vil D."/>
            <person name="Baker J."/>
            <person name="Kirchoff K."/>
            <person name="Toth K."/>
            <person name="King L."/>
            <person name="Bahret A."/>
            <person name="Miller B."/>
            <person name="Marra M.A."/>
            <person name="Martienssen R."/>
            <person name="McCombie W.R."/>
            <person name="Wilson R.K."/>
            <person name="Murphy G."/>
            <person name="Bancroft I."/>
            <person name="Volckaert G."/>
            <person name="Wambutt R."/>
            <person name="Duesterhoeft A."/>
            <person name="Stiekema W."/>
            <person name="Pohl T."/>
            <person name="Entian K.-D."/>
            <person name="Terryn N."/>
            <person name="Hartley N."/>
            <person name="Bent E."/>
            <person name="Johnson S."/>
            <person name="Langham S.-A."/>
            <person name="McCullagh B."/>
            <person name="Robben J."/>
            <person name="Grymonprez B."/>
            <person name="Zimmermann W."/>
            <person name="Ramsperger U."/>
            <person name="Wedler H."/>
            <person name="Balke K."/>
            <person name="Wedler E."/>
            <person name="Peters S."/>
            <person name="van Staveren M."/>
            <person name="Dirkse W."/>
            <person name="Mooijman P."/>
            <person name="Klein Lankhorst R."/>
            <person name="Weitzenegger T."/>
            <person name="Bothe G."/>
            <person name="Rose M."/>
            <person name="Hauf J."/>
            <person name="Berneiser S."/>
            <person name="Hempel S."/>
            <person name="Feldpausch M."/>
            <person name="Lamberth S."/>
            <person name="Villarroel R."/>
            <person name="Gielen J."/>
            <person name="Ardiles W."/>
            <person name="Bents O."/>
            <person name="Lemcke K."/>
            <person name="Kolesov G."/>
            <person name="Mayer K.F.X."/>
            <person name="Rudd S."/>
            <person name="Schoof H."/>
            <person name="Schueller C."/>
            <person name="Zaccaria P."/>
            <person name="Mewes H.-W."/>
            <person name="Bevan M."/>
            <person name="Fransz P.F."/>
        </authorList>
    </citation>
    <scope>NUCLEOTIDE SEQUENCE [LARGE SCALE GENOMIC DNA]</scope>
    <source>
        <strain>cv. Columbia</strain>
    </source>
</reference>
<reference key="2">
    <citation type="journal article" date="2017" name="Plant J.">
        <title>Araport11: a complete reannotation of the Arabidopsis thaliana reference genome.</title>
        <authorList>
            <person name="Cheng C.Y."/>
            <person name="Krishnakumar V."/>
            <person name="Chan A.P."/>
            <person name="Thibaud-Nissen F."/>
            <person name="Schobel S."/>
            <person name="Town C.D."/>
        </authorList>
    </citation>
    <scope>GENOME REANNOTATION</scope>
    <source>
        <strain>cv. Columbia</strain>
    </source>
</reference>
<reference key="3">
    <citation type="journal article" date="2006" name="Plant Biotechnol. J.">
        <title>Simultaneous high-throughput recombinational cloning of open reading frames in closed and open configurations.</title>
        <authorList>
            <person name="Underwood B.A."/>
            <person name="Vanderhaeghen R."/>
            <person name="Whitford R."/>
            <person name="Town C.D."/>
            <person name="Hilson P."/>
        </authorList>
    </citation>
    <scope>NUCLEOTIDE SEQUENCE [LARGE SCALE GENOMIC DNA]</scope>
    <source>
        <strain>cv. Columbia</strain>
    </source>
</reference>
<reference key="4">
    <citation type="journal article" date="2010" name="Plant Biol. 12 Suppl.">
        <title>Expression, localisation and phylogeny of a novel family of plant-specific membrane proteins.</title>
        <authorList>
            <person name="Kasaras A."/>
            <person name="Kunze R."/>
        </authorList>
    </citation>
    <scope>TISSUE SPECIFICITY</scope>
    <scope>GENE FAMILY</scope>
    <scope>NOMENCLATURE</scope>
    <source>
        <strain>cv. Columbia</strain>
    </source>
</reference>
<accession>Q3E912</accession>
<accession>A0MFI5</accession>
<dbReference type="EMBL" id="AC007123">
    <property type="status" value="NOT_ANNOTATED_CDS"/>
    <property type="molecule type" value="Genomic_DNA"/>
</dbReference>
<dbReference type="EMBL" id="CP002688">
    <property type="protein sequence ID" value="AED93677.1"/>
    <property type="molecule type" value="Genomic_DNA"/>
</dbReference>
<dbReference type="EMBL" id="DQ446990">
    <property type="protein sequence ID" value="ABE65562.1"/>
    <property type="molecule type" value="Genomic_DNA"/>
</dbReference>
<dbReference type="EMBL" id="DQ653311">
    <property type="protein sequence ID" value="ABK28280.1"/>
    <property type="status" value="ALT_SEQ"/>
    <property type="molecule type" value="Genomic_DNA"/>
</dbReference>
<dbReference type="RefSeq" id="NP_198089.1">
    <property type="nucleotide sequence ID" value="NM_122619.1"/>
</dbReference>
<dbReference type="IntAct" id="Q3E912">
    <property type="interactions" value="35"/>
</dbReference>
<dbReference type="STRING" id="3702.Q3E912"/>
<dbReference type="PaxDb" id="3702-AT5G27370.1"/>
<dbReference type="EnsemblPlants" id="AT5G27370.1">
    <property type="protein sequence ID" value="AT5G27370.1"/>
    <property type="gene ID" value="AT5G27370"/>
</dbReference>
<dbReference type="GeneID" id="832796"/>
<dbReference type="Gramene" id="AT5G27370.1">
    <property type="protein sequence ID" value="AT5G27370.1"/>
    <property type="gene ID" value="AT5G27370"/>
</dbReference>
<dbReference type="KEGG" id="ath:AT5G27370"/>
<dbReference type="Araport" id="AT5G27370"/>
<dbReference type="TAIR" id="AT5G27370">
    <property type="gene designation" value="DMP10"/>
</dbReference>
<dbReference type="eggNOG" id="ENOG502S0I6">
    <property type="taxonomic scope" value="Eukaryota"/>
</dbReference>
<dbReference type="HOGENOM" id="CLU_075936_3_0_1"/>
<dbReference type="InParanoid" id="Q3E912"/>
<dbReference type="OMA" id="EDDENSW"/>
<dbReference type="PhylomeDB" id="Q3E912"/>
<dbReference type="PRO" id="PR:Q3E912"/>
<dbReference type="Proteomes" id="UP000006548">
    <property type="component" value="Chromosome 5"/>
</dbReference>
<dbReference type="ExpressionAtlas" id="Q3E912">
    <property type="expression patterns" value="baseline and differential"/>
</dbReference>
<dbReference type="GO" id="GO:0005737">
    <property type="term" value="C:cytoplasm"/>
    <property type="evidence" value="ECO:0007669"/>
    <property type="project" value="UniProtKB-ARBA"/>
</dbReference>
<dbReference type="GO" id="GO:0043231">
    <property type="term" value="C:intracellular membrane-bounded organelle"/>
    <property type="evidence" value="ECO:0007669"/>
    <property type="project" value="UniProtKB-ARBA"/>
</dbReference>
<dbReference type="GO" id="GO:0016020">
    <property type="term" value="C:membrane"/>
    <property type="evidence" value="ECO:0007669"/>
    <property type="project" value="UniProtKB-SubCell"/>
</dbReference>
<dbReference type="GO" id="GO:0016301">
    <property type="term" value="F:kinase activity"/>
    <property type="evidence" value="ECO:0007669"/>
    <property type="project" value="UniProtKB-KW"/>
</dbReference>
<dbReference type="GO" id="GO:0010256">
    <property type="term" value="P:endomembrane system organization"/>
    <property type="evidence" value="ECO:0000250"/>
    <property type="project" value="UniProtKB"/>
</dbReference>
<dbReference type="InterPro" id="IPR007770">
    <property type="entry name" value="DMP"/>
</dbReference>
<dbReference type="PANTHER" id="PTHR31621:SF5">
    <property type="entry name" value="PROTEIN DMP10"/>
    <property type="match status" value="1"/>
</dbReference>
<dbReference type="PANTHER" id="PTHR31621">
    <property type="entry name" value="PROTEIN DMP3"/>
    <property type="match status" value="1"/>
</dbReference>
<dbReference type="Pfam" id="PF05078">
    <property type="entry name" value="DUF679"/>
    <property type="match status" value="1"/>
</dbReference>
<keyword id="KW-0418">Kinase</keyword>
<keyword id="KW-0472">Membrane</keyword>
<keyword id="KW-1185">Reference proteome</keyword>
<keyword id="KW-0808">Transferase</keyword>
<keyword id="KW-0812">Transmembrane</keyword>
<keyword id="KW-1133">Transmembrane helix</keyword>
<feature type="chain" id="PRO_0000441617" description="Protein DMP10">
    <location>
        <begin position="1"/>
        <end position="191"/>
    </location>
</feature>
<feature type="transmembrane region" description="Helical" evidence="2">
    <location>
        <begin position="15"/>
        <end position="35"/>
    </location>
</feature>
<feature type="transmembrane region" description="Helical" evidence="2">
    <location>
        <begin position="48"/>
        <end position="68"/>
    </location>
</feature>
<feature type="transmembrane region" description="Helical" evidence="2">
    <location>
        <begin position="114"/>
        <end position="134"/>
    </location>
</feature>
<feature type="transmembrane region" description="Helical" evidence="2">
    <location>
        <begin position="158"/>
        <end position="178"/>
    </location>
</feature>
<protein>
    <recommendedName>
        <fullName evidence="4">Protein DMP10</fullName>
        <shortName evidence="4">AtDMP10</shortName>
    </recommendedName>
</protein>
<evidence type="ECO:0000250" key="1">
    <source>
        <dbReference type="UniProtKB" id="Q9LVF4"/>
    </source>
</evidence>
<evidence type="ECO:0000255" key="2"/>
<evidence type="ECO:0000269" key="3">
    <source>
    </source>
</evidence>
<evidence type="ECO:0000303" key="4">
    <source>
    </source>
</evidence>
<evidence type="ECO:0000305" key="5"/>
<evidence type="ECO:0000312" key="6">
    <source>
        <dbReference type="Araport" id="AT5G27370"/>
    </source>
</evidence>
<organism>
    <name type="scientific">Arabidopsis thaliana</name>
    <name type="common">Mouse-ear cress</name>
    <dbReference type="NCBI Taxonomy" id="3702"/>
    <lineage>
        <taxon>Eukaryota</taxon>
        <taxon>Viridiplantae</taxon>
        <taxon>Streptophyta</taxon>
        <taxon>Embryophyta</taxon>
        <taxon>Tracheophyta</taxon>
        <taxon>Spermatophyta</taxon>
        <taxon>Magnoliopsida</taxon>
        <taxon>eudicotyledons</taxon>
        <taxon>Gunneridae</taxon>
        <taxon>Pentapetalae</taxon>
        <taxon>rosids</taxon>
        <taxon>malvids</taxon>
        <taxon>Brassicales</taxon>
        <taxon>Brassicaceae</taxon>
        <taxon>Camelineae</taxon>
        <taxon>Arabidopsis</taxon>
    </lineage>
</organism>
<sequence>MEASFIRSLPSAGNFANLLPTGTALIFETLLPSFSNGGECNNKPVNKLLTITLISFCAAACFFSSFTDSYVGQDGRIYYGIATSNGLHILNDYPDEGYDPESGLTADKRERYKLSFVDFVHAFVSVIVFLALAVESSDFRRCLLPEDDENSWGGHFVLMIKYFAVMVLTMASFFFAIFPSKRRGIGISDIR</sequence>
<proteinExistence type="evidence at transcript level"/>